<accession>A4XPF3</accession>
<organism>
    <name type="scientific">Ectopseudomonas mendocina (strain ymp)</name>
    <name type="common">Pseudomonas mendocina</name>
    <dbReference type="NCBI Taxonomy" id="399739"/>
    <lineage>
        <taxon>Bacteria</taxon>
        <taxon>Pseudomonadati</taxon>
        <taxon>Pseudomonadota</taxon>
        <taxon>Gammaproteobacteria</taxon>
        <taxon>Pseudomonadales</taxon>
        <taxon>Pseudomonadaceae</taxon>
        <taxon>Ectopseudomonas</taxon>
    </lineage>
</organism>
<gene>
    <name evidence="1" type="primary">ahcY</name>
    <name type="ordered locus">Pmen_0449</name>
</gene>
<keyword id="KW-0963">Cytoplasm</keyword>
<keyword id="KW-0378">Hydrolase</keyword>
<keyword id="KW-0520">NAD</keyword>
<keyword id="KW-0554">One-carbon metabolism</keyword>
<sequence length="469" mass="51330">MSAVLTPAGFTDYKVADISLADWGRKELIIAESEMPALMGLRRKYAASQPLKGAKILGCIHMTIQTGVLIETLTALGAEVRWSSCNIFSTQDQAAAAIAAAGIPVFAWKGETEEEYEWCIEQTILKDGKPWDANMVLDDGGDLTEILHKKYPQMLERIHGITEETTTGVHRLLDMLKAGTLKVPAINVNDAVTKSKNDNKYGCRHSLNDAIKRGTDHLLSGKQALVIGYGDVGKGSAQSLRQEGMIVKVSEIDPICAMQACMDGFELVSPYKNGINDGTESSVDAALLGKIDLIVTTTGNVNVCDAGMLKALKKRAVVCNIGHFDNEIDTAFMRKNWAWEEVKPQVHKIHRTGAGQFDPTNDDYLILLAEGRLVNLGNATGHPSRIMDGSFANQVLAQIFLFEQKFADLPAEKKAERLTVEVLPKKLDEEVALEMVKGFGGVVTQLTKQQAEYIGVTVEGPFKPDTYRY</sequence>
<feature type="chain" id="PRO_1000024751" description="Adenosylhomocysteinase">
    <location>
        <begin position="1"/>
        <end position="469"/>
    </location>
</feature>
<feature type="binding site" evidence="1">
    <location>
        <position position="63"/>
    </location>
    <ligand>
        <name>substrate</name>
    </ligand>
</feature>
<feature type="binding site" evidence="1">
    <location>
        <position position="139"/>
    </location>
    <ligand>
        <name>substrate</name>
    </ligand>
</feature>
<feature type="binding site" evidence="1">
    <location>
        <position position="164"/>
    </location>
    <ligand>
        <name>substrate</name>
    </ligand>
</feature>
<feature type="binding site" evidence="1">
    <location>
        <begin position="165"/>
        <end position="167"/>
    </location>
    <ligand>
        <name>NAD(+)</name>
        <dbReference type="ChEBI" id="CHEBI:57540"/>
    </ligand>
</feature>
<feature type="binding site" evidence="1">
    <location>
        <position position="194"/>
    </location>
    <ligand>
        <name>substrate</name>
    </ligand>
</feature>
<feature type="binding site" evidence="1">
    <location>
        <position position="198"/>
    </location>
    <ligand>
        <name>substrate</name>
    </ligand>
</feature>
<feature type="binding site" evidence="1">
    <location>
        <position position="199"/>
    </location>
    <ligand>
        <name>NAD(+)</name>
        <dbReference type="ChEBI" id="CHEBI:57540"/>
    </ligand>
</feature>
<feature type="binding site" evidence="1">
    <location>
        <begin position="228"/>
        <end position="233"/>
    </location>
    <ligand>
        <name>NAD(+)</name>
        <dbReference type="ChEBI" id="CHEBI:57540"/>
    </ligand>
</feature>
<feature type="binding site" evidence="1">
    <location>
        <position position="251"/>
    </location>
    <ligand>
        <name>NAD(+)</name>
        <dbReference type="ChEBI" id="CHEBI:57540"/>
    </ligand>
</feature>
<feature type="binding site" evidence="1">
    <location>
        <position position="300"/>
    </location>
    <ligand>
        <name>NAD(+)</name>
        <dbReference type="ChEBI" id="CHEBI:57540"/>
    </ligand>
</feature>
<feature type="binding site" evidence="1">
    <location>
        <begin position="321"/>
        <end position="323"/>
    </location>
    <ligand>
        <name>NAD(+)</name>
        <dbReference type="ChEBI" id="CHEBI:57540"/>
    </ligand>
</feature>
<feature type="binding site" evidence="1">
    <location>
        <position position="375"/>
    </location>
    <ligand>
        <name>NAD(+)</name>
        <dbReference type="ChEBI" id="CHEBI:57540"/>
    </ligand>
</feature>
<dbReference type="EC" id="3.13.2.1" evidence="1"/>
<dbReference type="EMBL" id="CP000680">
    <property type="protein sequence ID" value="ABP83219.1"/>
    <property type="molecule type" value="Genomic_DNA"/>
</dbReference>
<dbReference type="SMR" id="A4XPF3"/>
<dbReference type="STRING" id="399739.Pmen_0449"/>
<dbReference type="KEGG" id="pmy:Pmen_0449"/>
<dbReference type="PATRIC" id="fig|399739.8.peg.455"/>
<dbReference type="eggNOG" id="COG0499">
    <property type="taxonomic scope" value="Bacteria"/>
</dbReference>
<dbReference type="HOGENOM" id="CLU_025194_2_1_6"/>
<dbReference type="OrthoDB" id="9802717at2"/>
<dbReference type="UniPathway" id="UPA00314">
    <property type="reaction ID" value="UER00076"/>
</dbReference>
<dbReference type="GO" id="GO:0005829">
    <property type="term" value="C:cytosol"/>
    <property type="evidence" value="ECO:0007669"/>
    <property type="project" value="TreeGrafter"/>
</dbReference>
<dbReference type="GO" id="GO:0004013">
    <property type="term" value="F:adenosylhomocysteinase activity"/>
    <property type="evidence" value="ECO:0007669"/>
    <property type="project" value="UniProtKB-UniRule"/>
</dbReference>
<dbReference type="GO" id="GO:0071269">
    <property type="term" value="P:L-homocysteine biosynthetic process"/>
    <property type="evidence" value="ECO:0007669"/>
    <property type="project" value="UniProtKB-UniRule"/>
</dbReference>
<dbReference type="GO" id="GO:0006730">
    <property type="term" value="P:one-carbon metabolic process"/>
    <property type="evidence" value="ECO:0007669"/>
    <property type="project" value="UniProtKB-KW"/>
</dbReference>
<dbReference type="GO" id="GO:0033353">
    <property type="term" value="P:S-adenosylmethionine cycle"/>
    <property type="evidence" value="ECO:0007669"/>
    <property type="project" value="TreeGrafter"/>
</dbReference>
<dbReference type="CDD" id="cd00401">
    <property type="entry name" value="SAHH"/>
    <property type="match status" value="1"/>
</dbReference>
<dbReference type="FunFam" id="3.40.50.1480:FF:000006">
    <property type="entry name" value="Adenosylhomocysteinase"/>
    <property type="match status" value="1"/>
</dbReference>
<dbReference type="FunFam" id="3.40.50.1480:FF:000007">
    <property type="entry name" value="Adenosylhomocysteinase"/>
    <property type="match status" value="1"/>
</dbReference>
<dbReference type="FunFam" id="3.40.50.720:FF:000155">
    <property type="entry name" value="Adenosylhomocysteinase"/>
    <property type="match status" value="1"/>
</dbReference>
<dbReference type="Gene3D" id="3.40.50.1480">
    <property type="entry name" value="Adenosylhomocysteinase-like"/>
    <property type="match status" value="3"/>
</dbReference>
<dbReference type="Gene3D" id="3.40.50.720">
    <property type="entry name" value="NAD(P)-binding Rossmann-like Domain"/>
    <property type="match status" value="1"/>
</dbReference>
<dbReference type="HAMAP" id="MF_00563">
    <property type="entry name" value="AdoHcyase"/>
    <property type="match status" value="1"/>
</dbReference>
<dbReference type="InterPro" id="IPR042172">
    <property type="entry name" value="Adenosylhomocyst_ase-like_sf"/>
</dbReference>
<dbReference type="InterPro" id="IPR000043">
    <property type="entry name" value="Adenosylhomocysteinase-like"/>
</dbReference>
<dbReference type="InterPro" id="IPR015878">
    <property type="entry name" value="Ado_hCys_hydrolase_NAD-bd"/>
</dbReference>
<dbReference type="InterPro" id="IPR036291">
    <property type="entry name" value="NAD(P)-bd_dom_sf"/>
</dbReference>
<dbReference type="InterPro" id="IPR020082">
    <property type="entry name" value="S-Ado-L-homoCys_hydrolase_CS"/>
</dbReference>
<dbReference type="NCBIfam" id="TIGR00936">
    <property type="entry name" value="ahcY"/>
    <property type="match status" value="1"/>
</dbReference>
<dbReference type="NCBIfam" id="NF004005">
    <property type="entry name" value="PRK05476.2-3"/>
    <property type="match status" value="1"/>
</dbReference>
<dbReference type="PANTHER" id="PTHR23420">
    <property type="entry name" value="ADENOSYLHOMOCYSTEINASE"/>
    <property type="match status" value="1"/>
</dbReference>
<dbReference type="PANTHER" id="PTHR23420:SF0">
    <property type="entry name" value="ADENOSYLHOMOCYSTEINASE"/>
    <property type="match status" value="1"/>
</dbReference>
<dbReference type="Pfam" id="PF05221">
    <property type="entry name" value="AdoHcyase"/>
    <property type="match status" value="1"/>
</dbReference>
<dbReference type="Pfam" id="PF00670">
    <property type="entry name" value="AdoHcyase_NAD"/>
    <property type="match status" value="1"/>
</dbReference>
<dbReference type="PIRSF" id="PIRSF001109">
    <property type="entry name" value="Ad_hcy_hydrolase"/>
    <property type="match status" value="1"/>
</dbReference>
<dbReference type="SMART" id="SM00996">
    <property type="entry name" value="AdoHcyase"/>
    <property type="match status" value="1"/>
</dbReference>
<dbReference type="SMART" id="SM00997">
    <property type="entry name" value="AdoHcyase_NAD"/>
    <property type="match status" value="1"/>
</dbReference>
<dbReference type="SUPFAM" id="SSF52283">
    <property type="entry name" value="Formate/glycerate dehydrogenase catalytic domain-like"/>
    <property type="match status" value="1"/>
</dbReference>
<dbReference type="SUPFAM" id="SSF51735">
    <property type="entry name" value="NAD(P)-binding Rossmann-fold domains"/>
    <property type="match status" value="1"/>
</dbReference>
<dbReference type="PROSITE" id="PS00738">
    <property type="entry name" value="ADOHCYASE_1"/>
    <property type="match status" value="1"/>
</dbReference>
<dbReference type="PROSITE" id="PS00739">
    <property type="entry name" value="ADOHCYASE_2"/>
    <property type="match status" value="1"/>
</dbReference>
<evidence type="ECO:0000255" key="1">
    <source>
        <dbReference type="HAMAP-Rule" id="MF_00563"/>
    </source>
</evidence>
<name>SAHH_ECTM1</name>
<reference key="1">
    <citation type="submission" date="2007-04" db="EMBL/GenBank/DDBJ databases">
        <title>Complete sequence of Pseudomonas mendocina ymp.</title>
        <authorList>
            <consortium name="US DOE Joint Genome Institute"/>
            <person name="Copeland A."/>
            <person name="Lucas S."/>
            <person name="Lapidus A."/>
            <person name="Barry K."/>
            <person name="Glavina del Rio T."/>
            <person name="Dalin E."/>
            <person name="Tice H."/>
            <person name="Pitluck S."/>
            <person name="Kiss H."/>
            <person name="Brettin T."/>
            <person name="Detter J.C."/>
            <person name="Bruce D."/>
            <person name="Han C."/>
            <person name="Schmutz J."/>
            <person name="Larimer F."/>
            <person name="Land M."/>
            <person name="Hauser L."/>
            <person name="Kyrpides N."/>
            <person name="Mikhailova N."/>
            <person name="Hersman L."/>
            <person name="Dubois J."/>
            <person name="Maurice P."/>
            <person name="Richardson P."/>
        </authorList>
    </citation>
    <scope>NUCLEOTIDE SEQUENCE [LARGE SCALE GENOMIC DNA]</scope>
    <source>
        <strain>ymp</strain>
    </source>
</reference>
<protein>
    <recommendedName>
        <fullName evidence="1">Adenosylhomocysteinase</fullName>
        <ecNumber evidence="1">3.13.2.1</ecNumber>
    </recommendedName>
    <alternativeName>
        <fullName evidence="1">S-adenosyl-L-homocysteine hydrolase</fullName>
        <shortName evidence="1">AdoHcyase</shortName>
    </alternativeName>
</protein>
<comment type="function">
    <text evidence="1">May play a key role in the regulation of the intracellular concentration of adenosylhomocysteine.</text>
</comment>
<comment type="catalytic activity">
    <reaction evidence="1">
        <text>S-adenosyl-L-homocysteine + H2O = L-homocysteine + adenosine</text>
        <dbReference type="Rhea" id="RHEA:21708"/>
        <dbReference type="ChEBI" id="CHEBI:15377"/>
        <dbReference type="ChEBI" id="CHEBI:16335"/>
        <dbReference type="ChEBI" id="CHEBI:57856"/>
        <dbReference type="ChEBI" id="CHEBI:58199"/>
        <dbReference type="EC" id="3.13.2.1"/>
    </reaction>
</comment>
<comment type="cofactor">
    <cofactor evidence="1">
        <name>NAD(+)</name>
        <dbReference type="ChEBI" id="CHEBI:57540"/>
    </cofactor>
    <text evidence="1">Binds 1 NAD(+) per subunit.</text>
</comment>
<comment type="pathway">
    <text evidence="1">Amino-acid biosynthesis; L-homocysteine biosynthesis; L-homocysteine from S-adenosyl-L-homocysteine: step 1/1.</text>
</comment>
<comment type="subcellular location">
    <subcellularLocation>
        <location evidence="1">Cytoplasm</location>
    </subcellularLocation>
</comment>
<comment type="similarity">
    <text evidence="1">Belongs to the adenosylhomocysteinase family.</text>
</comment>
<proteinExistence type="inferred from homology"/>